<accession>P03390</accession>
<organismHost>
    <name type="scientific">Mus musculus</name>
    <name type="common">Mouse</name>
    <dbReference type="NCBI Taxonomy" id="10090"/>
</organismHost>
<gene>
    <name type="primary">env</name>
</gene>
<organism>
    <name type="scientific">Friend murine leukemia virus (isolate 57)</name>
    <name type="common">FrMLV</name>
    <dbReference type="NCBI Taxonomy" id="11796"/>
    <lineage>
        <taxon>Viruses</taxon>
        <taxon>Riboviria</taxon>
        <taxon>Pararnavirae</taxon>
        <taxon>Artverviricota</taxon>
        <taxon>Revtraviricetes</taxon>
        <taxon>Ortervirales</taxon>
        <taxon>Retroviridae</taxon>
        <taxon>Orthoretrovirinae</taxon>
        <taxon>Gammaretrovirus</taxon>
        <taxon>Murine leukemia virus</taxon>
    </lineage>
</organism>
<dbReference type="EMBL" id="X02794">
    <property type="protein sequence ID" value="CAA26561.1"/>
    <property type="molecule type" value="Genomic_RNA"/>
</dbReference>
<dbReference type="PDB" id="1AOL">
    <property type="method" value="X-ray"/>
    <property type="resolution" value="2.00 A"/>
    <property type="chains" value="A=43-270"/>
</dbReference>
<dbReference type="PDBsum" id="1AOL"/>
<dbReference type="SMR" id="P03390"/>
<dbReference type="GlyCosmos" id="P03390">
    <property type="glycosylation" value="7 sites, No reported glycans"/>
</dbReference>
<dbReference type="SwissPalm" id="P03390"/>
<dbReference type="EvolutionaryTrace" id="P03390"/>
<dbReference type="Proteomes" id="UP000007776">
    <property type="component" value="Genome"/>
</dbReference>
<dbReference type="GO" id="GO:0020002">
    <property type="term" value="C:host cell plasma membrane"/>
    <property type="evidence" value="ECO:0007669"/>
    <property type="project" value="UniProtKB-SubCell"/>
</dbReference>
<dbReference type="GO" id="GO:0016020">
    <property type="term" value="C:membrane"/>
    <property type="evidence" value="ECO:0007669"/>
    <property type="project" value="UniProtKB-KW"/>
</dbReference>
<dbReference type="GO" id="GO:0019031">
    <property type="term" value="C:viral envelope"/>
    <property type="evidence" value="ECO:0007669"/>
    <property type="project" value="UniProtKB-KW"/>
</dbReference>
<dbReference type="GO" id="GO:0055036">
    <property type="term" value="C:virion membrane"/>
    <property type="evidence" value="ECO:0007669"/>
    <property type="project" value="UniProtKB-SubCell"/>
</dbReference>
<dbReference type="GO" id="GO:0046872">
    <property type="term" value="F:metal ion binding"/>
    <property type="evidence" value="ECO:0007669"/>
    <property type="project" value="UniProtKB-KW"/>
</dbReference>
<dbReference type="GO" id="GO:0019064">
    <property type="term" value="P:fusion of virus membrane with host plasma membrane"/>
    <property type="evidence" value="ECO:0007669"/>
    <property type="project" value="UniProtKB-KW"/>
</dbReference>
<dbReference type="GO" id="GO:0046718">
    <property type="term" value="P:symbiont entry into host cell"/>
    <property type="evidence" value="ECO:0007669"/>
    <property type="project" value="UniProtKB-KW"/>
</dbReference>
<dbReference type="GO" id="GO:0019062">
    <property type="term" value="P:virion attachment to host cell"/>
    <property type="evidence" value="ECO:0007669"/>
    <property type="project" value="UniProtKB-KW"/>
</dbReference>
<dbReference type="CDD" id="cd09851">
    <property type="entry name" value="HTLV-1-like_HR1-HR2"/>
    <property type="match status" value="1"/>
</dbReference>
<dbReference type="FunFam" id="1.10.287.210:FF:000005">
    <property type="entry name" value="Envelope glycoprotein"/>
    <property type="match status" value="1"/>
</dbReference>
<dbReference type="Gene3D" id="1.10.287.210">
    <property type="match status" value="1"/>
</dbReference>
<dbReference type="Gene3D" id="3.90.310.10">
    <property type="entry name" value="ENV polyprotein, receptor-binding domain"/>
    <property type="match status" value="1"/>
</dbReference>
<dbReference type="InterPro" id="IPR008981">
    <property type="entry name" value="FMuLV_rcpt-bd"/>
</dbReference>
<dbReference type="InterPro" id="IPR018154">
    <property type="entry name" value="TLV/ENV_coat_polyprotein"/>
</dbReference>
<dbReference type="PANTHER" id="PTHR10424:SF72">
    <property type="entry name" value="BC035947 PROTEIN-RELATED"/>
    <property type="match status" value="1"/>
</dbReference>
<dbReference type="PANTHER" id="PTHR10424">
    <property type="entry name" value="VIRAL ENVELOPE PROTEIN"/>
    <property type="match status" value="1"/>
</dbReference>
<dbReference type="Pfam" id="PF00429">
    <property type="entry name" value="TLV_coat"/>
    <property type="match status" value="1"/>
</dbReference>
<dbReference type="SUPFAM" id="SSF49830">
    <property type="entry name" value="ENV polyprotein, receptor-binding domain"/>
    <property type="match status" value="1"/>
</dbReference>
<dbReference type="SUPFAM" id="SSF58069">
    <property type="entry name" value="Virus ectodomain"/>
    <property type="match status" value="1"/>
</dbReference>
<reference key="1">
    <citation type="submission" date="1990-09" db="EMBL/GenBank/DDBJ databases">
        <authorList>
            <person name="Friedrich R.W."/>
            <person name="Koch W."/>
            <person name="von Maydell-Livonius U."/>
            <person name="Schrewe H."/>
            <person name="Zimmermann W."/>
        </authorList>
    </citation>
    <scope>NUCLEOTIDE SEQUENCE [GENOMIC RNA]</scope>
</reference>
<reference key="2">
    <citation type="journal article" date="1984" name="J. Virol.">
        <title>Molecular analysis of the envelope gene and long terminal repeat of Friend mink cell focus-inducing virus: implications for the functions of these sequences.</title>
        <authorList>
            <person name="Koch W."/>
            <person name="Zimmermann W."/>
            <person name="Oliff A."/>
            <person name="Friedrich R.W."/>
        </authorList>
    </citation>
    <scope>PRELIMINARY NUCLEOTIDE SEQUENCE</scope>
</reference>
<reference key="3">
    <citation type="journal article" date="1996" name="Virology">
        <title>Palmitoylation of the murine leukemia virus envelope glycoprotein transmembrane subunits.</title>
        <authorList>
            <person name="Yang C."/>
            <person name="Compans R.W."/>
        </authorList>
    </citation>
    <scope>PALMITOYLATION AT CYS-640 OF THE TRANSMEMBRANE PROTEIN</scope>
    <scope>MUTAGENESIS OF CYS-640</scope>
</reference>
<reference key="4">
    <citation type="journal article" date="1997" name="Science">
        <title>Structure of a murine leukemia virus receptor-binding glycoprotein at 2.0-A resolution.</title>
        <authorList>
            <person name="Fass D."/>
            <person name="Davey R.A."/>
            <person name="Hamson C.A."/>
            <person name="Kim P.S."/>
            <person name="Cunningham J.M."/>
            <person name="Berger J.M."/>
        </authorList>
    </citation>
    <scope>X-RAY CRYSTALLOGRAPHY (2.0 ANGSTROMS) OF 43-270</scope>
</reference>
<feature type="signal peptide" evidence="2">
    <location>
        <begin position="1"/>
        <end position="34"/>
    </location>
</feature>
<feature type="chain" id="PRO_0000239581" description="Envelope glycoprotein">
    <location>
        <begin position="35"/>
        <end position="675"/>
    </location>
</feature>
<feature type="chain" id="PRO_0000040751" description="Surface protein" evidence="1">
    <location>
        <begin position="35"/>
        <end position="479"/>
    </location>
</feature>
<feature type="chain" id="PRO_0000040752" description="Transmembrane protein" evidence="1">
    <location>
        <begin position="480"/>
        <end position="659"/>
    </location>
</feature>
<feature type="peptide" id="PRO_0000040753" description="R-peptide" evidence="1">
    <location>
        <begin position="660"/>
        <end position="675"/>
    </location>
</feature>
<feature type="topological domain" description="Extracellular" evidence="2">
    <location>
        <begin position="35"/>
        <end position="620"/>
    </location>
</feature>
<feature type="transmembrane region" description="Helical" evidence="2">
    <location>
        <begin position="621"/>
        <end position="641"/>
    </location>
</feature>
<feature type="topological domain" description="Cytoplasmic" evidence="2">
    <location>
        <begin position="642"/>
        <end position="675"/>
    </location>
</feature>
<feature type="region of interest" description="Receptor-binding domain (RBD)" evidence="2">
    <location>
        <begin position="35"/>
        <end position="270"/>
    </location>
</feature>
<feature type="region of interest" description="Disordered" evidence="3">
    <location>
        <begin position="276"/>
        <end position="323"/>
    </location>
</feature>
<feature type="region of interest" description="Fusion peptide" evidence="1">
    <location>
        <begin position="482"/>
        <end position="502"/>
    </location>
</feature>
<feature type="region of interest" description="Immunosuppression" evidence="1">
    <location>
        <begin position="548"/>
        <end position="564"/>
    </location>
</feature>
<feature type="coiled-coil region" evidence="2">
    <location>
        <begin position="513"/>
        <end position="547"/>
    </location>
</feature>
<feature type="short sequence motif" description="CXXC">
    <location>
        <begin position="346"/>
        <end position="349"/>
    </location>
</feature>
<feature type="short sequence motif" description="CX6CC">
    <location>
        <begin position="565"/>
        <end position="573"/>
    </location>
</feature>
<feature type="short sequence motif" description="YXXL motif; contains endocytosis signal" evidence="1">
    <location>
        <begin position="665"/>
        <end position="668"/>
    </location>
</feature>
<feature type="compositionally biased region" description="Pro residues" evidence="3">
    <location>
        <begin position="285"/>
        <end position="295"/>
    </location>
</feature>
<feature type="compositionally biased region" description="Low complexity" evidence="3">
    <location>
        <begin position="296"/>
        <end position="308"/>
    </location>
</feature>
<feature type="compositionally biased region" description="Pro residues" evidence="3">
    <location>
        <begin position="309"/>
        <end position="318"/>
    </location>
</feature>
<feature type="binding site">
    <location>
        <position position="89"/>
    </location>
    <ligand>
        <name>Zn(2+)</name>
        <dbReference type="ChEBI" id="CHEBI:29105"/>
    </ligand>
</feature>
<feature type="binding site">
    <location>
        <position position="120"/>
    </location>
    <ligand>
        <name>Zn(2+)</name>
        <dbReference type="ChEBI" id="CHEBI:29105"/>
    </ligand>
</feature>
<feature type="site" description="Cleavage; by host" evidence="1">
    <location>
        <begin position="479"/>
        <end position="480"/>
    </location>
</feature>
<feature type="site" description="Cleavage; by viral protease p14" evidence="1">
    <location>
        <begin position="659"/>
        <end position="660"/>
    </location>
</feature>
<feature type="lipid moiety-binding region" description="S-palmitoyl cysteine; by host" evidence="4">
    <location>
        <position position="640"/>
    </location>
</feature>
<feature type="glycosylation site" description="N-linked (GlcNAc...) asparagine; by host">
    <location>
        <position position="46"/>
    </location>
</feature>
<feature type="glycosylation site" description="N-linked (GlcNAc...) asparagine; by host">
    <location>
        <position position="202"/>
    </location>
</feature>
<feature type="glycosylation site" description="N-linked (GlcNAc...) asparagine; by host" evidence="1">
    <location>
        <position position="336"/>
    </location>
</feature>
<feature type="glycosylation site" description="N-linked (GlcNAc...) asparagine; by host" evidence="2">
    <location>
        <position position="368"/>
    </location>
</feature>
<feature type="glycosylation site" description="N-linked (GlcNAc...) asparagine; by host" evidence="2">
    <location>
        <position position="375"/>
    </location>
</feature>
<feature type="glycosylation site" description="N-linked (GlcNAc...) asparagine; by host" evidence="2">
    <location>
        <position position="408"/>
    </location>
</feature>
<feature type="glycosylation site" description="N-linked (GlcNAc...) asparagine; by host" evidence="2">
    <location>
        <position position="444"/>
    </location>
</feature>
<feature type="disulfide bond">
    <location>
        <begin position="80"/>
        <end position="132"/>
    </location>
</feature>
<feature type="disulfide bond">
    <location>
        <begin position="106"/>
        <end position="121"/>
    </location>
</feature>
<feature type="disulfide bond">
    <location>
        <begin position="107"/>
        <end position="117"/>
    </location>
</feature>
<feature type="disulfide bond">
    <location>
        <begin position="155"/>
        <end position="175"/>
    </location>
</feature>
<feature type="disulfide bond">
    <location>
        <begin position="167"/>
        <end position="180"/>
    </location>
</feature>
<feature type="disulfide bond">
    <location>
        <begin position="212"/>
        <end position="218"/>
    </location>
</feature>
<feature type="disulfide bond" description="Interchain (between SU and TM chains, or C-349 with C-573); in linked form">
    <location>
        <begin position="346"/>
        <end position="573"/>
    </location>
</feature>
<feature type="disulfide bond">
    <location>
        <begin position="346"/>
        <end position="349"/>
    </location>
</feature>
<feature type="disulfide bond" evidence="1">
    <location>
        <begin position="376"/>
        <end position="430"/>
    </location>
</feature>
<feature type="disulfide bond" evidence="1">
    <location>
        <begin position="395"/>
        <end position="407"/>
    </location>
</feature>
<feature type="disulfide bond" evidence="1">
    <location>
        <begin position="437"/>
        <end position="450"/>
    </location>
</feature>
<feature type="disulfide bond" evidence="1">
    <location>
        <begin position="565"/>
        <end position="572"/>
    </location>
</feature>
<feature type="mutagenesis site" description="Complete loss of palmitoylation." evidence="4">
    <original>C</original>
    <variation>S</variation>
    <location>
        <position position="640"/>
    </location>
</feature>
<feature type="strand" evidence="5">
    <location>
        <begin position="44"/>
        <end position="52"/>
    </location>
</feature>
<feature type="strand" evidence="5">
    <location>
        <begin position="58"/>
        <end position="67"/>
    </location>
</feature>
<feature type="helix" evidence="5">
    <location>
        <begin position="79"/>
        <end position="83"/>
    </location>
</feature>
<feature type="helix" evidence="5">
    <location>
        <begin position="88"/>
        <end position="90"/>
    </location>
</feature>
<feature type="helix" evidence="5">
    <location>
        <begin position="119"/>
        <end position="122"/>
    </location>
</feature>
<feature type="strand" evidence="5">
    <location>
        <begin position="130"/>
        <end position="134"/>
    </location>
</feature>
<feature type="helix" evidence="5">
    <location>
        <begin position="135"/>
        <end position="146"/>
    </location>
</feature>
<feature type="strand" evidence="5">
    <location>
        <begin position="152"/>
        <end position="156"/>
    </location>
</feature>
<feature type="helix" evidence="5">
    <location>
        <begin position="164"/>
        <end position="167"/>
    </location>
</feature>
<feature type="helix" evidence="5">
    <location>
        <begin position="170"/>
        <end position="172"/>
    </location>
</feature>
<feature type="strand" evidence="5">
    <location>
        <begin position="183"/>
        <end position="186"/>
    </location>
</feature>
<feature type="strand" evidence="5">
    <location>
        <begin position="196"/>
        <end position="203"/>
    </location>
</feature>
<feature type="helix" evidence="5">
    <location>
        <begin position="205"/>
        <end position="213"/>
    </location>
</feature>
<feature type="strand" evidence="5">
    <location>
        <begin position="220"/>
        <end position="225"/>
    </location>
</feature>
<feature type="helix" evidence="5">
    <location>
        <begin position="227"/>
        <end position="231"/>
    </location>
</feature>
<feature type="helix" evidence="5">
    <location>
        <begin position="234"/>
        <end position="236"/>
    </location>
</feature>
<feature type="strand" evidence="5">
    <location>
        <begin position="239"/>
        <end position="245"/>
    </location>
</feature>
<feature type="turn" evidence="5">
    <location>
        <begin position="248"/>
        <end position="250"/>
    </location>
</feature>
<feature type="strand" evidence="5">
    <location>
        <begin position="253"/>
        <end position="263"/>
    </location>
</feature>
<feature type="helix" evidence="5">
    <location>
        <begin position="266"/>
        <end position="268"/>
    </location>
</feature>
<protein>
    <recommendedName>
        <fullName>Envelope glycoprotein</fullName>
    </recommendedName>
    <alternativeName>
        <fullName>Env polyprotein</fullName>
    </alternativeName>
    <component>
        <recommendedName>
            <fullName>Surface protein</fullName>
            <shortName>SU</shortName>
        </recommendedName>
        <alternativeName>
            <fullName>Glycoprotein 70</fullName>
            <shortName>gp70</shortName>
        </alternativeName>
    </component>
    <component>
        <recommendedName>
            <fullName>Transmembrane protein</fullName>
            <shortName>TM</shortName>
        </recommendedName>
        <alternativeName>
            <fullName>Envelope protein p15E</fullName>
        </alternativeName>
    </component>
    <component>
        <recommendedName>
            <fullName>R-peptide</fullName>
        </recommendedName>
        <alternativeName>
            <fullName>p2E</fullName>
        </alternativeName>
    </component>
</protein>
<sequence length="675" mass="74025">MACSTLPKSPKDKIDPRDLLIPLILFLSLKGARSAAPGSSPHQVYNITWEVTNGDRETVWAISGNHPLWTWWPVLTPDLCMLALSGPPHWGLEYQAPYSSPPGPPCCSGSSGSSAGCSRDCDEPLTSLTPRCNTAWNRLKLDQVTHKSSEGFYVCPGSHRPREAKSCGGPDSFYCASWGCETTGRVYWKPSSSWDYITVDNNLTTSQAVQVCKDNKWCNPLAIQFTNAGKQVTSWTTGHYWGLRLYVSGRDPGLTFGIRLRYQNLGPRVPIGPNPVLADQLSLPRPNPLPKPAKSPPASNSTPTLISPSPTPTQPPPAGTGDRLLNLVQGAYQALNLTNPDKTQECWLCLVSGPPYYEGVAVLGTYSNHTSAPANCSVASQHKLTLSEVTGRGLCIGTVPKTHQALCNTTLKIDKGSYYLVAPTGTTWACNTGLTPCLSATVLNRTTDYCVLVELWPRVTYHPPSYVYSQFEKSYRHKREPVSLTLALLLGGLTMGGIAAGVGTGTTALVATQQFQQLHAAVQDDLKEVEKSITNLEKSLTSLSEVVLQNRRGLDLLFLKEGGLCAALKEECCFYADHTGLVRDSMAKLRERLTQRQKLFESSQGWFEGLFNRSPWFTTLISTIMGPLIILLLILLFGPCILNRLVQFVKDRISVVQALVLTQQYHQLKPLEYEP</sequence>
<comment type="function">
    <text evidence="1">The surface protein (SU) attaches the virus to the host cell by binding to its receptor. This interaction triggers the refolding of the transmembrane protein (TM) and is thought to activate its fusogenic potential by unmasking its fusion peptide. Fusion occurs at the host cell plasma membrane (By similarity).</text>
</comment>
<comment type="function">
    <text evidence="1">The transmembrane protein (TM) acts as a class I viral fusion protein. Under the current model, the protein has at least 3 conformational states: pre-fusion native state, pre-hairpin intermediate state, and post-fusion hairpin state. During viral and target cell membrane fusion, the coiled coil regions (heptad repeats) assume a trimer-of-hairpins structure, positioning the fusion peptide in close proximity to the C-terminal region of the ectodomain. The formation of this structure appears to drive apposition and subsequent fusion of viral and target cell membranes. Membranes fusion leads to delivery of the nucleocapsid into the cytoplasm (By similarity).</text>
</comment>
<comment type="subunit">
    <text evidence="1">The mature envelope protein (Env) consists of a trimer of SU-TM heterodimers attached by a labile interchain disulfide bond.</text>
</comment>
<comment type="subcellular location">
    <molecule>Transmembrane protein</molecule>
    <subcellularLocation>
        <location evidence="1">Virion membrane</location>
        <topology evidence="1">Single-pass type I membrane protein</topology>
    </subcellularLocation>
    <subcellularLocation>
        <location evidence="1">Host cell membrane</location>
        <topology evidence="1">Single-pass type I membrane protein</topology>
    </subcellularLocation>
</comment>
<comment type="subcellular location">
    <molecule>Surface protein</molecule>
    <subcellularLocation>
        <location>Virion membrane</location>
        <topology>Peripheral membrane protein</topology>
    </subcellularLocation>
    <subcellularLocation>
        <location evidence="1">Host cell membrane</location>
        <topology evidence="1">Peripheral membrane protein</topology>
    </subcellularLocation>
    <text evidence="1">The surface protein is not anchored to the viral envelope, but associates with the virion surface through its binding to TM. Both proteins are thought to be concentrated at the site of budding and incorporated into the virions possibly by contacts between the cytoplasmic tail of Env and the N-terminus of Gag (By similarity).</text>
</comment>
<comment type="subcellular location">
    <molecule>R-peptide</molecule>
    <subcellularLocation>
        <location evidence="1">Host cell membrane</location>
        <topology evidence="1">Peripheral membrane protein</topology>
    </subcellularLocation>
    <text evidence="1">The R-peptide is membrane-associated through its palmitate.</text>
</comment>
<comment type="domain">
    <text>The YXXL motif is involved in determining the exact site of viral release at the surface of infected mononuclear cells and promotes endocytosis.</text>
</comment>
<comment type="domain">
    <text evidence="1">The 17 amino acids long immunosuppressive region is present in many retroviral envelope proteins. Synthetic peptides derived from this relatively conserved sequence inhibit immune function in vitro and in vivo (By similarity).</text>
</comment>
<comment type="PTM">
    <text evidence="1">Specific enzymatic cleavages in vivo yield mature proteins. Envelope glycoproteins are synthesized as an inactive precursor that is N-glycosylated and processed likely by host cell furin or by a furin-like protease in the Golgi to yield the mature SU and TM proteins. The cleavage site between SU and TM requires the minimal sequence [KR]-X-[KR]-R. The R-peptide is released from the C-terminus of the cytoplasmic tail of the TM protein upon particle formation as a result of proteolytic cleavage by the viral protease. Cleavage of this peptide is required for TM to become fusogenic (By similarity).</text>
</comment>
<comment type="PTM">
    <text evidence="1">The CXXC motif is highly conserved across a broad range of retroviral envelope proteins. It is thought to participate in the formation of a labile disulfide bond possibly with the CX6CC motif present in the transmembrane protein. Isomerization of the intersubunit disulfide bond to an SU intrachain disulfide bond is thought to occur upon receptor recognition in order to allow membrane fusion (By similarity).</text>
</comment>
<comment type="PTM">
    <text evidence="4">The transmembrane protein is palmitoylated.</text>
</comment>
<comment type="PTM">
    <text evidence="1">The R-peptide is palmitoylated.</text>
</comment>
<evidence type="ECO:0000250" key="1"/>
<evidence type="ECO:0000255" key="2"/>
<evidence type="ECO:0000256" key="3">
    <source>
        <dbReference type="SAM" id="MobiDB-lite"/>
    </source>
</evidence>
<evidence type="ECO:0000269" key="4">
    <source>
    </source>
</evidence>
<evidence type="ECO:0007829" key="5">
    <source>
        <dbReference type="PDB" id="1AOL"/>
    </source>
</evidence>
<proteinExistence type="evidence at protein level"/>
<keyword id="KW-0002">3D-structure</keyword>
<keyword id="KW-0165">Cleavage on pair of basic residues</keyword>
<keyword id="KW-0175">Coiled coil</keyword>
<keyword id="KW-1015">Disulfide bond</keyword>
<keyword id="KW-1169">Fusion of virus membrane with host cell membrane</keyword>
<keyword id="KW-1168">Fusion of virus membrane with host membrane</keyword>
<keyword id="KW-0325">Glycoprotein</keyword>
<keyword id="KW-1032">Host cell membrane</keyword>
<keyword id="KW-1043">Host membrane</keyword>
<keyword id="KW-0945">Host-virus interaction</keyword>
<keyword id="KW-0449">Lipoprotein</keyword>
<keyword id="KW-0472">Membrane</keyword>
<keyword id="KW-0479">Metal-binding</keyword>
<keyword id="KW-0564">Palmitate</keyword>
<keyword id="KW-0732">Signal</keyword>
<keyword id="KW-0812">Transmembrane</keyword>
<keyword id="KW-1133">Transmembrane helix</keyword>
<keyword id="KW-1161">Viral attachment to host cell</keyword>
<keyword id="KW-0261">Viral envelope protein</keyword>
<keyword id="KW-1162">Viral penetration into host cytoplasm</keyword>
<keyword id="KW-0946">Virion</keyword>
<keyword id="KW-1160">Virus entry into host cell</keyword>
<keyword id="KW-0862">Zinc</keyword>
<name>ENV_MLVF5</name>